<sequence>MEIIMIFVSGILTSISVYLVLSKSLIRIIMGTTLLTHAANLFLITMGGLKHGTVPIFEKGTSSYVDPIPQALILTAIVIAFATTAFFLVLAFRTYKELGTDNVELMKGAPEDDRE</sequence>
<name>MNHC1_STAEQ</name>
<evidence type="ECO:0000250" key="1"/>
<evidence type="ECO:0000255" key="2"/>
<evidence type="ECO:0000305" key="3"/>
<dbReference type="EMBL" id="CP000029">
    <property type="protein sequence ID" value="AAW53939.1"/>
    <property type="molecule type" value="Genomic_DNA"/>
</dbReference>
<dbReference type="RefSeq" id="WP_001831949.1">
    <property type="nucleotide sequence ID" value="NC_002976.3"/>
</dbReference>
<dbReference type="SMR" id="Q5HQL2"/>
<dbReference type="STRING" id="176279.SERP0536"/>
<dbReference type="GeneID" id="50019209"/>
<dbReference type="KEGG" id="ser:SERP0536"/>
<dbReference type="eggNOG" id="COG1006">
    <property type="taxonomic scope" value="Bacteria"/>
</dbReference>
<dbReference type="HOGENOM" id="CLU_082058_3_1_9"/>
<dbReference type="Proteomes" id="UP000000531">
    <property type="component" value="Chromosome"/>
</dbReference>
<dbReference type="GO" id="GO:0005886">
    <property type="term" value="C:plasma membrane"/>
    <property type="evidence" value="ECO:0007669"/>
    <property type="project" value="UniProtKB-SubCell"/>
</dbReference>
<dbReference type="GO" id="GO:0015297">
    <property type="term" value="F:antiporter activity"/>
    <property type="evidence" value="ECO:0007669"/>
    <property type="project" value="UniProtKB-KW"/>
</dbReference>
<dbReference type="GO" id="GO:0008324">
    <property type="term" value="F:monoatomic cation transmembrane transporter activity"/>
    <property type="evidence" value="ECO:0007669"/>
    <property type="project" value="InterPro"/>
</dbReference>
<dbReference type="GO" id="GO:1902600">
    <property type="term" value="P:proton transmembrane transport"/>
    <property type="evidence" value="ECO:0007669"/>
    <property type="project" value="UniProtKB-KW"/>
</dbReference>
<dbReference type="GO" id="GO:0006814">
    <property type="term" value="P:sodium ion transport"/>
    <property type="evidence" value="ECO:0007669"/>
    <property type="project" value="UniProtKB-KW"/>
</dbReference>
<dbReference type="Gene3D" id="1.10.287.3510">
    <property type="match status" value="1"/>
</dbReference>
<dbReference type="InterPro" id="IPR050601">
    <property type="entry name" value="CPA3_antiporter_subunitC"/>
</dbReference>
<dbReference type="InterPro" id="IPR006673">
    <property type="entry name" value="Mnh_C1_su"/>
</dbReference>
<dbReference type="InterPro" id="IPR039428">
    <property type="entry name" value="NUOK/Mnh_C1-like"/>
</dbReference>
<dbReference type="NCBIfam" id="TIGR00941">
    <property type="entry name" value="2a6301s03"/>
    <property type="match status" value="1"/>
</dbReference>
<dbReference type="NCBIfam" id="NF006372">
    <property type="entry name" value="PRK08600.1"/>
    <property type="match status" value="1"/>
</dbReference>
<dbReference type="NCBIfam" id="NF006573">
    <property type="entry name" value="PRK09094.1"/>
    <property type="match status" value="1"/>
</dbReference>
<dbReference type="NCBIfam" id="NF009303">
    <property type="entry name" value="PRK12660.1"/>
    <property type="match status" value="1"/>
</dbReference>
<dbReference type="PANTHER" id="PTHR34583">
    <property type="entry name" value="ANTIPORTER SUBUNIT MNHC2-RELATED"/>
    <property type="match status" value="1"/>
</dbReference>
<dbReference type="PANTHER" id="PTHR34583:SF2">
    <property type="entry name" value="ANTIPORTER SUBUNIT MNHC2-RELATED"/>
    <property type="match status" value="1"/>
</dbReference>
<dbReference type="Pfam" id="PF00420">
    <property type="entry name" value="Oxidored_q2"/>
    <property type="match status" value="1"/>
</dbReference>
<comment type="function">
    <text evidence="1">Mnh complex is a Na(+)/H(+) antiporter involved in Na(+) excretion.</text>
</comment>
<comment type="subunit">
    <text evidence="1">May form a heterooligomeric complex that consists of seven subunits: mnhA1, mnhB1, mnhC1, mnhD1, mnhE1, mnhF1 and mnhG1.</text>
</comment>
<comment type="subcellular location">
    <subcellularLocation>
        <location evidence="3">Cell membrane</location>
        <topology evidence="3">Multi-pass membrane protein</topology>
    </subcellularLocation>
</comment>
<comment type="similarity">
    <text evidence="3">Belongs to the CPA3 antiporters (TC 2.A.63) subunit C family.</text>
</comment>
<proteinExistence type="inferred from homology"/>
<gene>
    <name type="primary">mnhC1</name>
    <name type="ordered locus">SERP0536</name>
</gene>
<keyword id="KW-0050">Antiport</keyword>
<keyword id="KW-1003">Cell membrane</keyword>
<keyword id="KW-0375">Hydrogen ion transport</keyword>
<keyword id="KW-0406">Ion transport</keyword>
<keyword id="KW-0472">Membrane</keyword>
<keyword id="KW-1185">Reference proteome</keyword>
<keyword id="KW-0915">Sodium</keyword>
<keyword id="KW-0739">Sodium transport</keyword>
<keyword id="KW-0812">Transmembrane</keyword>
<keyword id="KW-1133">Transmembrane helix</keyword>
<keyword id="KW-0813">Transport</keyword>
<organism>
    <name type="scientific">Staphylococcus epidermidis (strain ATCC 35984 / DSM 28319 / BCRC 17069 / CCUG 31568 / BM 3577 / RP62A)</name>
    <dbReference type="NCBI Taxonomy" id="176279"/>
    <lineage>
        <taxon>Bacteria</taxon>
        <taxon>Bacillati</taxon>
        <taxon>Bacillota</taxon>
        <taxon>Bacilli</taxon>
        <taxon>Bacillales</taxon>
        <taxon>Staphylococcaceae</taxon>
        <taxon>Staphylococcus</taxon>
    </lineage>
</organism>
<protein>
    <recommendedName>
        <fullName>Na(+)/H(+) antiporter subunit C1</fullName>
    </recommendedName>
    <alternativeName>
        <fullName>Mnh complex subunit C1</fullName>
    </alternativeName>
</protein>
<reference key="1">
    <citation type="journal article" date="2005" name="J. Bacteriol.">
        <title>Insights on evolution of virulence and resistance from the complete genome analysis of an early methicillin-resistant Staphylococcus aureus strain and a biofilm-producing methicillin-resistant Staphylococcus epidermidis strain.</title>
        <authorList>
            <person name="Gill S.R."/>
            <person name="Fouts D.E."/>
            <person name="Archer G.L."/>
            <person name="Mongodin E.F."/>
            <person name="DeBoy R.T."/>
            <person name="Ravel J."/>
            <person name="Paulsen I.T."/>
            <person name="Kolonay J.F."/>
            <person name="Brinkac L.M."/>
            <person name="Beanan M.J."/>
            <person name="Dodson R.J."/>
            <person name="Daugherty S.C."/>
            <person name="Madupu R."/>
            <person name="Angiuoli S.V."/>
            <person name="Durkin A.S."/>
            <person name="Haft D.H."/>
            <person name="Vamathevan J.J."/>
            <person name="Khouri H."/>
            <person name="Utterback T.R."/>
            <person name="Lee C."/>
            <person name="Dimitrov G."/>
            <person name="Jiang L."/>
            <person name="Qin H."/>
            <person name="Weidman J."/>
            <person name="Tran K."/>
            <person name="Kang K.H."/>
            <person name="Hance I.R."/>
            <person name="Nelson K.E."/>
            <person name="Fraser C.M."/>
        </authorList>
    </citation>
    <scope>NUCLEOTIDE SEQUENCE [LARGE SCALE GENOMIC DNA]</scope>
    <source>
        <strain>ATCC 35984 / DSM 28319 / BCRC 17069 / CCUG 31568 / BM 3577 / RP62A</strain>
    </source>
</reference>
<feature type="chain" id="PRO_0000372126" description="Na(+)/H(+) antiporter subunit C1">
    <location>
        <begin position="1"/>
        <end position="115"/>
    </location>
</feature>
<feature type="transmembrane region" description="Helical" evidence="2">
    <location>
        <begin position="1"/>
        <end position="21"/>
    </location>
</feature>
<feature type="transmembrane region" description="Helical" evidence="2">
    <location>
        <begin position="28"/>
        <end position="48"/>
    </location>
</feature>
<feature type="transmembrane region" description="Helical" evidence="2">
    <location>
        <begin position="72"/>
        <end position="92"/>
    </location>
</feature>
<accession>Q5HQL2</accession>